<comment type="function">
    <text evidence="2 8">C-22 sterol desaturase; part of the third module of ergosterol biosynthesis pathway that includes the late steps of the pathway (By similarity). ERG5A and ERG5B convert 5-dehydroepisterol into ergosta-5,7,22,24(28)-tetraen-3beta-ol by forming the C-22(23) double bond in the sterol side chain (By similarity). The third module or late pathway involves the ergosterol synthesis itself through consecutive reactions that mainly occur in the endoplasmic reticulum (ER) membrane. Firstly, the squalene synthase ERG9 catalyzes the condensation of 2 farnesyl pyrophosphate moieties to form squalene, which is the precursor of all steroids. Squalene synthase is crucial for balancing the incorporation of farnesyl diphosphate (FPP) into sterol and nonsterol isoprene synthesis. Secondly, squalene is converted into lanosterol by the consecutive action of the squalene epoxidase ERG1 and the lanosterol synthase ERG7. Then, the delta(24)-sterol C-methyltransferase ERG6 methylates lanosterol at C-24 to produce eburicol. Eburicol is the substrate of the sterol 14-alpha demethylase encoded by CYP51A, CYP51B and CYP51C, to yield 4,4,24-trimethyl ergosta-8,14,24(28)-trienol. CYP51B encodes the enzyme primarily responsible for sterol 14-alpha-demethylation, and plays an essential role in ascospore formation. CYP51A encodes an additional sterol 14-alpha-demethylase, induced on ergosterol depletion and responsible for the intrinsic variation in azole sensitivity. The third CYP51 isoform, CYP51C, does not encode a sterol 14-alpha-demethylase, but is required for full virulence on host wheat ears. The C-14 reductase ERG24 then reduces the C14=C15 double bond which leads to 4,4-dimethylfecosterol. A sequence of further demethylations at C-4, involving the C-4 demethylation complex containing the C-4 methylsterol oxidases ERG25, the sterol-4-alpha-carboxylate 3-dehydrogenase ERG26 and the 3-keto-steroid reductase ERG27, leads to the production of fecosterol via 4-methylfecosterol. ERG28 has a role as a scaffold to help anchor ERG25, ERG26 and ERG27 to the endoplasmic reticulum. The C-8 sterol isomerase ERG2 then catalyzes the reaction which results in unsaturation at C-7 in the B ring of sterols and thus converts fecosterol to episterol. The sterol-C5-desaturases ERG3A and ERG3BB then catalyze the introduction of a C-5 double bond in the B ring to produce 5-dehydroepisterol. The C-22 sterol desaturases ERG5A and ERG5B further convert 5-dehydroepisterol into ergosta-5,7,22,24(28)-tetraen-3beta-ol by forming the C-22(23) double bond in the sterol side chain. Finally, ergosta-5,7,22,24(28)-tetraen-3beta-ol is substrate of the C-24(28) sterol reductase ERG4 to produce ergosterol (Probable).</text>
</comment>
<comment type="catalytic activity">
    <reaction evidence="8">
        <text>5-dehydroepisterol + NADPH + O2 + H(+) = ergosta-5,7,22,24(28)-tetraen-3beta-ol + NADP(+) + 2 H2O</text>
        <dbReference type="Rhea" id="RHEA:33467"/>
        <dbReference type="ChEBI" id="CHEBI:15377"/>
        <dbReference type="ChEBI" id="CHEBI:15378"/>
        <dbReference type="ChEBI" id="CHEBI:15379"/>
        <dbReference type="ChEBI" id="CHEBI:18249"/>
        <dbReference type="ChEBI" id="CHEBI:52972"/>
        <dbReference type="ChEBI" id="CHEBI:57783"/>
        <dbReference type="ChEBI" id="CHEBI:58349"/>
        <dbReference type="EC" id="1.14.19.41"/>
    </reaction>
    <physiologicalReaction direction="left-to-right" evidence="8">
        <dbReference type="Rhea" id="RHEA:33468"/>
    </physiologicalReaction>
</comment>
<comment type="cofactor">
    <cofactor evidence="1">
        <name>heme</name>
        <dbReference type="ChEBI" id="CHEBI:30413"/>
    </cofactor>
</comment>
<comment type="pathway">
    <text evidence="8">Steroid metabolism; ergosterol biosynthesis.</text>
</comment>
<comment type="subcellular location">
    <subcellularLocation>
        <location evidence="7">Endoplasmic reticulum membrane</location>
        <topology evidence="3">Single-pass membrane protein</topology>
    </subcellularLocation>
</comment>
<comment type="disruption phenotype">
    <text evidence="4 5">Leads to a severe decrease in conidiation and virulence when ERG5B is also deleted (PubMed:23442154). The absence of both ERG5A and ERG5B seems not to affect the ergosterol production (PubMed:24785759).</text>
</comment>
<comment type="miscellaneous">
    <text evidence="4">In Fusarium, the biosynthesis pathway of the sterol precursors leading to the prevalent sterol ergosterol differs from yeast. The ringsystem of lanosterol in S.cerevisiae is firstly demethylised in three enzymatic steps leading to the intermediate zymosterol and secondly a methyl group is added to zymosterol by the sterol 24-C-methyltransferase to form fecosterol. In Fusarium, lanosterol is firstly transmethylated by the sterol 24-C-methyltransferase leading to the intermediate eburicol and secondly demethylated in three steps to form fecosterol.</text>
</comment>
<comment type="similarity">
    <text evidence="7">Belongs to the cytochrome P450 family.</text>
</comment>
<name>ERG5A_GIBZE</name>
<accession>I1RE80</accession>
<proteinExistence type="inferred from homology"/>
<dbReference type="EC" id="1.14.19.41" evidence="8"/>
<dbReference type="EMBL" id="HG970332">
    <property type="protein sequence ID" value="CEF74171.1"/>
    <property type="molecule type" value="Genomic_DNA"/>
</dbReference>
<dbReference type="RefSeq" id="XP_011317815.1">
    <property type="nucleotide sequence ID" value="XM_011319513.1"/>
</dbReference>
<dbReference type="SMR" id="I1RE80"/>
<dbReference type="FunCoup" id="I1RE80">
    <property type="interactions" value="1556"/>
</dbReference>
<dbReference type="STRING" id="229533.I1RE80"/>
<dbReference type="KEGG" id="fgr:FGSG_01959"/>
<dbReference type="VEuPathDB" id="FungiDB:FGRAMPH1_01G04729"/>
<dbReference type="eggNOG" id="KOG0157">
    <property type="taxonomic scope" value="Eukaryota"/>
</dbReference>
<dbReference type="HOGENOM" id="CLU_023517_0_0_1"/>
<dbReference type="InParanoid" id="I1RE80"/>
<dbReference type="OrthoDB" id="54240at110618"/>
<dbReference type="UniPathway" id="UPA00768"/>
<dbReference type="PHI-base" id="PHI:3037"/>
<dbReference type="Proteomes" id="UP000070720">
    <property type="component" value="Chromosome 1"/>
</dbReference>
<dbReference type="GO" id="GO:0005789">
    <property type="term" value="C:endoplasmic reticulum membrane"/>
    <property type="evidence" value="ECO:0007669"/>
    <property type="project" value="UniProtKB-SubCell"/>
</dbReference>
<dbReference type="GO" id="GO:0020037">
    <property type="term" value="F:heme binding"/>
    <property type="evidence" value="ECO:0007669"/>
    <property type="project" value="InterPro"/>
</dbReference>
<dbReference type="GO" id="GO:0005506">
    <property type="term" value="F:iron ion binding"/>
    <property type="evidence" value="ECO:0007669"/>
    <property type="project" value="InterPro"/>
</dbReference>
<dbReference type="GO" id="GO:0004497">
    <property type="term" value="F:monooxygenase activity"/>
    <property type="evidence" value="ECO:0007669"/>
    <property type="project" value="UniProtKB-KW"/>
</dbReference>
<dbReference type="GO" id="GO:0016705">
    <property type="term" value="F:oxidoreductase activity, acting on paired donors, with incorporation or reduction of molecular oxygen"/>
    <property type="evidence" value="ECO:0007669"/>
    <property type="project" value="InterPro"/>
</dbReference>
<dbReference type="GO" id="GO:0016126">
    <property type="term" value="P:sterol biosynthetic process"/>
    <property type="evidence" value="ECO:0007669"/>
    <property type="project" value="UniProtKB-UniPathway"/>
</dbReference>
<dbReference type="CDD" id="cd11082">
    <property type="entry name" value="CYP61_CYP710"/>
    <property type="match status" value="1"/>
</dbReference>
<dbReference type="FunFam" id="1.10.630.10:FF:000021">
    <property type="entry name" value="Cytochrome P450 61"/>
    <property type="match status" value="1"/>
</dbReference>
<dbReference type="Gene3D" id="1.10.630.10">
    <property type="entry name" value="Cytochrome P450"/>
    <property type="match status" value="1"/>
</dbReference>
<dbReference type="InterPro" id="IPR001128">
    <property type="entry name" value="Cyt_P450"/>
</dbReference>
<dbReference type="InterPro" id="IPR017972">
    <property type="entry name" value="Cyt_P450_CS"/>
</dbReference>
<dbReference type="InterPro" id="IPR002403">
    <property type="entry name" value="Cyt_P450_E_grp-IV"/>
</dbReference>
<dbReference type="InterPro" id="IPR036396">
    <property type="entry name" value="Cyt_P450_sf"/>
</dbReference>
<dbReference type="PANTHER" id="PTHR24286:SF228">
    <property type="entry name" value="C-22 STEROL DESATURASE ERG5"/>
    <property type="match status" value="1"/>
</dbReference>
<dbReference type="PANTHER" id="PTHR24286">
    <property type="entry name" value="CYTOCHROME P450 26"/>
    <property type="match status" value="1"/>
</dbReference>
<dbReference type="Pfam" id="PF00067">
    <property type="entry name" value="p450"/>
    <property type="match status" value="1"/>
</dbReference>
<dbReference type="PRINTS" id="PR00465">
    <property type="entry name" value="EP450IV"/>
</dbReference>
<dbReference type="PRINTS" id="PR00385">
    <property type="entry name" value="P450"/>
</dbReference>
<dbReference type="SUPFAM" id="SSF48264">
    <property type="entry name" value="Cytochrome P450"/>
    <property type="match status" value="1"/>
</dbReference>
<dbReference type="PROSITE" id="PS00086">
    <property type="entry name" value="CYTOCHROME_P450"/>
    <property type="match status" value="1"/>
</dbReference>
<evidence type="ECO:0000250" key="1">
    <source>
        <dbReference type="UniProtKB" id="P04798"/>
    </source>
</evidence>
<evidence type="ECO:0000250" key="2">
    <source>
        <dbReference type="UniProtKB" id="P54781"/>
    </source>
</evidence>
<evidence type="ECO:0000255" key="3"/>
<evidence type="ECO:0000269" key="4">
    <source>
    </source>
</evidence>
<evidence type="ECO:0000269" key="5">
    <source>
    </source>
</evidence>
<evidence type="ECO:0000303" key="6">
    <source>
    </source>
</evidence>
<evidence type="ECO:0000305" key="7"/>
<evidence type="ECO:0000305" key="8">
    <source>
    </source>
</evidence>
<sequence length="536" mass="60505">MEAVNSTTSGFSSVLAGTKYANVNIPPQIDYVIEAVSNAGVWTWVFTLVALCIAYDQIAYIVRKGPIVGPAMKIPFIGPFLDSMDPRFDGYHAKWSSGPLSCVSIFHKFVVIASTRDMARKVFNSPAYVKPTVVDVAPKLLGHDNWVFLDGKAHVDFRKGLNGLFTRKALELYLPGQEEAYNTYFKHFLKMTKDAGGKPVPFMHEFREVMCAVSCRTFVGHYISDEAVTKIAEDYYLITAALELVNLPVILPYTKSWYGKKAADMVLAEFSKCAAKSKVRMAAGGEVTCIMDAWILSMIQSERWRKAEEKGEPHNVEKPSPLLRMFNDYEISQTIFTFLFASQDATSSAATWLFQVTAQRPDVLDRVREENIKIRNGDPNAPLTMDQLESLTYTRAVVRELLRWRPPVIMVPYVTKKAFPLTDDYTVPKGSMLIPTTFMALHDPEVYDNPSHFDPERYYSGDAEEKGSKNYLVFGTGPHYCLGQVYAQLNLALMIGKASVMLDWKHHATPKSEEIKVFATIFPMDDCPLTFEERKW</sequence>
<reference key="1">
    <citation type="journal article" date="2007" name="Science">
        <title>The Fusarium graminearum genome reveals a link between localized polymorphism and pathogen specialization.</title>
        <authorList>
            <person name="Cuomo C.A."/>
            <person name="Gueldener U."/>
            <person name="Xu J.-R."/>
            <person name="Trail F."/>
            <person name="Turgeon B.G."/>
            <person name="Di Pietro A."/>
            <person name="Walton J.D."/>
            <person name="Ma L.-J."/>
            <person name="Baker S.E."/>
            <person name="Rep M."/>
            <person name="Adam G."/>
            <person name="Antoniw J."/>
            <person name="Baldwin T."/>
            <person name="Calvo S.E."/>
            <person name="Chang Y.-L."/>
            <person name="DeCaprio D."/>
            <person name="Gale L.R."/>
            <person name="Gnerre S."/>
            <person name="Goswami R.S."/>
            <person name="Hammond-Kosack K."/>
            <person name="Harris L.J."/>
            <person name="Hilburn K."/>
            <person name="Kennell J.C."/>
            <person name="Kroken S."/>
            <person name="Magnuson J.K."/>
            <person name="Mannhaupt G."/>
            <person name="Mauceli E.W."/>
            <person name="Mewes H.-W."/>
            <person name="Mitterbauer R."/>
            <person name="Muehlbauer G."/>
            <person name="Muensterkoetter M."/>
            <person name="Nelson D."/>
            <person name="O'Donnell K."/>
            <person name="Ouellet T."/>
            <person name="Qi W."/>
            <person name="Quesneville H."/>
            <person name="Roncero M.I.G."/>
            <person name="Seong K.-Y."/>
            <person name="Tetko I.V."/>
            <person name="Urban M."/>
            <person name="Waalwijk C."/>
            <person name="Ward T.J."/>
            <person name="Yao J."/>
            <person name="Birren B.W."/>
            <person name="Kistler H.C."/>
        </authorList>
    </citation>
    <scope>NUCLEOTIDE SEQUENCE [LARGE SCALE GENOMIC DNA]</scope>
    <source>
        <strain>ATCC MYA-4620 / CBS 123657 / FGSC 9075 / NRRL 31084 / PH-1</strain>
    </source>
</reference>
<reference key="2">
    <citation type="journal article" date="2010" name="Nature">
        <title>Comparative genomics reveals mobile pathogenicity chromosomes in Fusarium.</title>
        <authorList>
            <person name="Ma L.-J."/>
            <person name="van der Does H.C."/>
            <person name="Borkovich K.A."/>
            <person name="Coleman J.J."/>
            <person name="Daboussi M.-J."/>
            <person name="Di Pietro A."/>
            <person name="Dufresne M."/>
            <person name="Freitag M."/>
            <person name="Grabherr M."/>
            <person name="Henrissat B."/>
            <person name="Houterman P.M."/>
            <person name="Kang S."/>
            <person name="Shim W.-B."/>
            <person name="Woloshuk C."/>
            <person name="Xie X."/>
            <person name="Xu J.-R."/>
            <person name="Antoniw J."/>
            <person name="Baker S.E."/>
            <person name="Bluhm B.H."/>
            <person name="Breakspear A."/>
            <person name="Brown D.W."/>
            <person name="Butchko R.A.E."/>
            <person name="Chapman S."/>
            <person name="Coulson R."/>
            <person name="Coutinho P.M."/>
            <person name="Danchin E.G.J."/>
            <person name="Diener A."/>
            <person name="Gale L.R."/>
            <person name="Gardiner D.M."/>
            <person name="Goff S."/>
            <person name="Hammond-Kosack K.E."/>
            <person name="Hilburn K."/>
            <person name="Hua-Van A."/>
            <person name="Jonkers W."/>
            <person name="Kazan K."/>
            <person name="Kodira C.D."/>
            <person name="Koehrsen M."/>
            <person name="Kumar L."/>
            <person name="Lee Y.-H."/>
            <person name="Li L."/>
            <person name="Manners J.M."/>
            <person name="Miranda-Saavedra D."/>
            <person name="Mukherjee M."/>
            <person name="Park G."/>
            <person name="Park J."/>
            <person name="Park S.-Y."/>
            <person name="Proctor R.H."/>
            <person name="Regev A."/>
            <person name="Ruiz-Roldan M.C."/>
            <person name="Sain D."/>
            <person name="Sakthikumar S."/>
            <person name="Sykes S."/>
            <person name="Schwartz D.C."/>
            <person name="Turgeon B.G."/>
            <person name="Wapinski I."/>
            <person name="Yoder O."/>
            <person name="Young S."/>
            <person name="Zeng Q."/>
            <person name="Zhou S."/>
            <person name="Galagan J."/>
            <person name="Cuomo C.A."/>
            <person name="Kistler H.C."/>
            <person name="Rep M."/>
        </authorList>
    </citation>
    <scope>GENOME REANNOTATION</scope>
    <source>
        <strain>ATCC MYA-4620 / CBS 123657 / FGSC 9075 / NRRL 31084 / PH-1</strain>
    </source>
</reference>
<reference key="3">
    <citation type="journal article" date="2015" name="BMC Genomics">
        <title>The completed genome sequence of the pathogenic ascomycete fungus Fusarium graminearum.</title>
        <authorList>
            <person name="King R."/>
            <person name="Urban M."/>
            <person name="Hammond-Kosack M.C.U."/>
            <person name="Hassani-Pak K."/>
            <person name="Hammond-Kosack K.E."/>
        </authorList>
    </citation>
    <scope>NUCLEOTIDE SEQUENCE [LARGE SCALE GENOMIC DNA]</scope>
    <source>
        <strain>ATCC MYA-4620 / CBS 123657 / FGSC 9075 / NRRL 31084 / PH-1</strain>
    </source>
</reference>
<reference key="4">
    <citation type="journal article" date="2013" name="New Phytol.">
        <title>Characterization of the sterol 14alpha-demethylases of Fusarium graminearum identifies a novel genus-specific CYP51 function.</title>
        <authorList>
            <person name="Fan J."/>
            <person name="Urban M."/>
            <person name="Parker J.E."/>
            <person name="Brewer H.C."/>
            <person name="Kelly S.L."/>
            <person name="Hammond-Kosack K.E."/>
            <person name="Fraaije B.A."/>
            <person name="Liu X."/>
            <person name="Cools H.J."/>
        </authorList>
    </citation>
    <scope>FUNCTION</scope>
    <scope>DISRUPTION PHENOTYPE</scope>
    <scope>PATHWAY</scope>
</reference>
<reference key="5">
    <citation type="journal article" date="2014" name="Fungal Genet. Biol.">
        <title>Functional characterization of FgERG3 and FgERG5 associated with ergosterol biosynthesis, vegetative differentiation and virulence of Fusarium graminearum.</title>
        <authorList>
            <person name="Yun Y."/>
            <person name="Yin D."/>
            <person name="Dawood D.H."/>
            <person name="Liu X."/>
            <person name="Chen Y."/>
            <person name="Ma Z."/>
        </authorList>
    </citation>
    <scope>DISRUPTION PHENOTYPE</scope>
</reference>
<keyword id="KW-0256">Endoplasmic reticulum</keyword>
<keyword id="KW-0349">Heme</keyword>
<keyword id="KW-0408">Iron</keyword>
<keyword id="KW-0444">Lipid biosynthesis</keyword>
<keyword id="KW-0443">Lipid metabolism</keyword>
<keyword id="KW-0472">Membrane</keyword>
<keyword id="KW-0479">Metal-binding</keyword>
<keyword id="KW-0503">Monooxygenase</keyword>
<keyword id="KW-0560">Oxidoreductase</keyword>
<keyword id="KW-1185">Reference proteome</keyword>
<keyword id="KW-0752">Steroid biosynthesis</keyword>
<keyword id="KW-0753">Steroid metabolism</keyword>
<keyword id="KW-0756">Sterol biosynthesis</keyword>
<keyword id="KW-1207">Sterol metabolism</keyword>
<keyword id="KW-0812">Transmembrane</keyword>
<keyword id="KW-1133">Transmembrane helix</keyword>
<organism>
    <name type="scientific">Gibberella zeae (strain ATCC MYA-4620 / CBS 123657 / FGSC 9075 / NRRL 31084 / PH-1)</name>
    <name type="common">Wheat head blight fungus</name>
    <name type="synonym">Fusarium graminearum</name>
    <dbReference type="NCBI Taxonomy" id="229533"/>
    <lineage>
        <taxon>Eukaryota</taxon>
        <taxon>Fungi</taxon>
        <taxon>Dikarya</taxon>
        <taxon>Ascomycota</taxon>
        <taxon>Pezizomycotina</taxon>
        <taxon>Sordariomycetes</taxon>
        <taxon>Hypocreomycetidae</taxon>
        <taxon>Hypocreales</taxon>
        <taxon>Nectriaceae</taxon>
        <taxon>Fusarium</taxon>
    </lineage>
</organism>
<feature type="chain" id="PRO_0000454353" description="C-22 sterol desaturase ERG5A">
    <location>
        <begin position="1"/>
        <end position="536"/>
    </location>
</feature>
<feature type="transmembrane region" description="Helical" evidence="3">
    <location>
        <begin position="41"/>
        <end position="61"/>
    </location>
</feature>
<feature type="binding site" description="axial binding residue" evidence="1">
    <location>
        <position position="481"/>
    </location>
    <ligand>
        <name>heme</name>
        <dbReference type="ChEBI" id="CHEBI:30413"/>
    </ligand>
    <ligandPart>
        <name>Fe</name>
        <dbReference type="ChEBI" id="CHEBI:18248"/>
    </ligandPart>
</feature>
<protein>
    <recommendedName>
        <fullName evidence="6">C-22 sterol desaturase ERG5A</fullName>
        <ecNumber evidence="8">1.14.19.41</ecNumber>
    </recommendedName>
    <alternativeName>
        <fullName evidence="6">Ergosterol biosynthetic protein 5A</fullName>
    </alternativeName>
</protein>
<gene>
    <name evidence="6" type="primary">ERG5A</name>
    <name type="ORF">FG01959</name>
    <name type="ORF">FGRAMPH1_01T04729</name>
</gene>